<reference key="1">
    <citation type="journal article" date="2009" name="Science">
        <title>The dynamics and time scale of ongoing genomic erosion in symbiotic bacteria.</title>
        <authorList>
            <person name="Moran N.A."/>
            <person name="McLaughlin H.J."/>
            <person name="Sorek R."/>
        </authorList>
    </citation>
    <scope>NUCLEOTIDE SEQUENCE [LARGE SCALE GENOMIC DNA]</scope>
    <source>
        <strain>5A</strain>
    </source>
</reference>
<dbReference type="EMBL" id="CP001161">
    <property type="protein sequence ID" value="ACL30390.1"/>
    <property type="molecule type" value="Genomic_DNA"/>
</dbReference>
<dbReference type="RefSeq" id="WP_009873965.1">
    <property type="nucleotide sequence ID" value="NC_011833.1"/>
</dbReference>
<dbReference type="SMR" id="B8D8G8"/>
<dbReference type="KEGG" id="bap:BUAP5A_003"/>
<dbReference type="HOGENOM" id="CLU_148047_1_0_6"/>
<dbReference type="OrthoDB" id="9811659at2"/>
<dbReference type="Proteomes" id="UP000006904">
    <property type="component" value="Chromosome"/>
</dbReference>
<dbReference type="GO" id="GO:0005886">
    <property type="term" value="C:plasma membrane"/>
    <property type="evidence" value="ECO:0007669"/>
    <property type="project" value="UniProtKB-SubCell"/>
</dbReference>
<dbReference type="GO" id="GO:0045259">
    <property type="term" value="C:proton-transporting ATP synthase complex"/>
    <property type="evidence" value="ECO:0007669"/>
    <property type="project" value="UniProtKB-KW"/>
</dbReference>
<dbReference type="GO" id="GO:0033177">
    <property type="term" value="C:proton-transporting two-sector ATPase complex, proton-transporting domain"/>
    <property type="evidence" value="ECO:0007669"/>
    <property type="project" value="InterPro"/>
</dbReference>
<dbReference type="GO" id="GO:0008289">
    <property type="term" value="F:lipid binding"/>
    <property type="evidence" value="ECO:0007669"/>
    <property type="project" value="UniProtKB-KW"/>
</dbReference>
<dbReference type="GO" id="GO:0046933">
    <property type="term" value="F:proton-transporting ATP synthase activity, rotational mechanism"/>
    <property type="evidence" value="ECO:0007669"/>
    <property type="project" value="UniProtKB-UniRule"/>
</dbReference>
<dbReference type="CDD" id="cd18185">
    <property type="entry name" value="ATP-synt_Fo_c_ATPE"/>
    <property type="match status" value="1"/>
</dbReference>
<dbReference type="FunFam" id="1.20.20.10:FF:000002">
    <property type="entry name" value="ATP synthase subunit c"/>
    <property type="match status" value="1"/>
</dbReference>
<dbReference type="Gene3D" id="1.20.20.10">
    <property type="entry name" value="F1F0 ATP synthase subunit C"/>
    <property type="match status" value="1"/>
</dbReference>
<dbReference type="HAMAP" id="MF_01396">
    <property type="entry name" value="ATP_synth_c_bact"/>
    <property type="match status" value="1"/>
</dbReference>
<dbReference type="InterPro" id="IPR005953">
    <property type="entry name" value="ATP_synth_csu_bac/chlpt"/>
</dbReference>
<dbReference type="InterPro" id="IPR000454">
    <property type="entry name" value="ATP_synth_F0_csu"/>
</dbReference>
<dbReference type="InterPro" id="IPR020537">
    <property type="entry name" value="ATP_synth_F0_csu_DDCD_BS"/>
</dbReference>
<dbReference type="InterPro" id="IPR038662">
    <property type="entry name" value="ATP_synth_F0_csu_sf"/>
</dbReference>
<dbReference type="InterPro" id="IPR002379">
    <property type="entry name" value="ATPase_proteolipid_c-like_dom"/>
</dbReference>
<dbReference type="InterPro" id="IPR035921">
    <property type="entry name" value="F/V-ATP_Csub_sf"/>
</dbReference>
<dbReference type="NCBIfam" id="TIGR01260">
    <property type="entry name" value="ATP_synt_c"/>
    <property type="match status" value="1"/>
</dbReference>
<dbReference type="NCBIfam" id="NF005363">
    <property type="entry name" value="PRK06876.1"/>
    <property type="match status" value="1"/>
</dbReference>
<dbReference type="Pfam" id="PF00137">
    <property type="entry name" value="ATP-synt_C"/>
    <property type="match status" value="1"/>
</dbReference>
<dbReference type="PRINTS" id="PR00124">
    <property type="entry name" value="ATPASEC"/>
</dbReference>
<dbReference type="SUPFAM" id="SSF81333">
    <property type="entry name" value="F1F0 ATP synthase subunit C"/>
    <property type="match status" value="1"/>
</dbReference>
<dbReference type="PROSITE" id="PS00605">
    <property type="entry name" value="ATPASE_C"/>
    <property type="match status" value="1"/>
</dbReference>
<comment type="function">
    <text evidence="1">F(1)F(0) ATP synthase produces ATP from ADP in the presence of a proton or sodium gradient. F-type ATPases consist of two structural domains, F(1) containing the extramembraneous catalytic core and F(0) containing the membrane proton channel, linked together by a central stalk and a peripheral stalk. During catalysis, ATP synthesis in the catalytic domain of F(1) is coupled via a rotary mechanism of the central stalk subunits to proton translocation.</text>
</comment>
<comment type="function">
    <text evidence="1">Key component of the F(0) channel; it plays a direct role in translocation across the membrane. A homomeric c-ring of between 10-14 subunits forms the central stalk rotor element with the F(1) delta and epsilon subunits.</text>
</comment>
<comment type="subunit">
    <text evidence="1">F-type ATPases have 2 components, F(1) - the catalytic core - and F(0) - the membrane proton channel. F(1) has five subunits: alpha(3), beta(3), gamma(1), delta(1), epsilon(1). F(0) has three main subunits: a(1), b(2) and c(10-14). The alpha and beta chains form an alternating ring which encloses part of the gamma chain. F(1) is attached to F(0) by a central stalk formed by the gamma and epsilon chains, while a peripheral stalk is formed by the delta and b chains.</text>
</comment>
<comment type="subcellular location">
    <subcellularLocation>
        <location evidence="1">Cell membrane</location>
        <topology evidence="1">Multi-pass membrane protein</topology>
    </subcellularLocation>
</comment>
<comment type="similarity">
    <text evidence="1">Belongs to the ATPase C chain family.</text>
</comment>
<protein>
    <recommendedName>
        <fullName evidence="1">ATP synthase subunit c</fullName>
    </recommendedName>
    <alternativeName>
        <fullName evidence="1">ATP synthase F(0) sector subunit c</fullName>
    </alternativeName>
    <alternativeName>
        <fullName evidence="1">F-type ATPase subunit c</fullName>
        <shortName evidence="1">F-ATPase subunit c</shortName>
    </alternativeName>
    <alternativeName>
        <fullName evidence="1">Lipid-binding protein</fullName>
    </alternativeName>
</protein>
<feature type="chain" id="PRO_1000184342" description="ATP synthase subunit c">
    <location>
        <begin position="1"/>
        <end position="79"/>
    </location>
</feature>
<feature type="transmembrane region" description="Helical" evidence="1">
    <location>
        <begin position="11"/>
        <end position="31"/>
    </location>
</feature>
<feature type="transmembrane region" description="Helical" evidence="1">
    <location>
        <begin position="53"/>
        <end position="73"/>
    </location>
</feature>
<feature type="site" description="Reversibly protonated during proton transport" evidence="1">
    <location>
        <position position="61"/>
    </location>
</feature>
<organism>
    <name type="scientific">Buchnera aphidicola subsp. Acyrthosiphon pisum (strain 5A)</name>
    <dbReference type="NCBI Taxonomy" id="563178"/>
    <lineage>
        <taxon>Bacteria</taxon>
        <taxon>Pseudomonadati</taxon>
        <taxon>Pseudomonadota</taxon>
        <taxon>Gammaproteobacteria</taxon>
        <taxon>Enterobacterales</taxon>
        <taxon>Erwiniaceae</taxon>
        <taxon>Buchnera</taxon>
    </lineage>
</organism>
<name>ATPL_BUCA5</name>
<keyword id="KW-0066">ATP synthesis</keyword>
<keyword id="KW-1003">Cell membrane</keyword>
<keyword id="KW-0138">CF(0)</keyword>
<keyword id="KW-0375">Hydrogen ion transport</keyword>
<keyword id="KW-0406">Ion transport</keyword>
<keyword id="KW-0446">Lipid-binding</keyword>
<keyword id="KW-0472">Membrane</keyword>
<keyword id="KW-0812">Transmembrane</keyword>
<keyword id="KW-1133">Transmembrane helix</keyword>
<keyword id="KW-0813">Transport</keyword>
<sequence>MENLNVDMLYIAVAIMVGLASIGAAIGIGILGGKFLEGAARQPDLVPLLRTQFFVVMGLVDAIPMIAVGLGLYMLFAIS</sequence>
<accession>B8D8G8</accession>
<gene>
    <name evidence="1" type="primary">atpE</name>
    <name type="ordered locus">BUAP5A_003</name>
</gene>
<proteinExistence type="inferred from homology"/>
<evidence type="ECO:0000255" key="1">
    <source>
        <dbReference type="HAMAP-Rule" id="MF_01396"/>
    </source>
</evidence>